<proteinExistence type="inferred from homology"/>
<protein>
    <recommendedName>
        <fullName>NADH-ubiquinone oxidoreductase chain 4</fullName>
        <ecNumber>7.1.1.2</ecNumber>
    </recommendedName>
    <alternativeName>
        <fullName>NADH dehydrogenase subunit 4</fullName>
    </alternativeName>
</protein>
<name>NU4M_CROCL</name>
<feature type="chain" id="PRO_0000117926" description="NADH-ubiquinone oxidoreductase chain 4">
    <location>
        <begin position="1" status="less than"/>
        <end position="231" status="greater than"/>
    </location>
</feature>
<feature type="transmembrane region" description="Helical" evidence="2">
    <location>
        <begin position="1"/>
        <end position="21"/>
    </location>
</feature>
<feature type="transmembrane region" description="Helical" evidence="2">
    <location>
        <begin position="34"/>
        <end position="54"/>
    </location>
</feature>
<feature type="transmembrane region" description="Helical" evidence="2">
    <location>
        <begin position="63"/>
        <end position="85"/>
    </location>
</feature>
<feature type="transmembrane region" description="Helical" evidence="2">
    <location>
        <begin position="89"/>
        <end position="111"/>
    </location>
</feature>
<feature type="transmembrane region" description="Helical" evidence="2">
    <location>
        <begin position="128"/>
        <end position="148"/>
    </location>
</feature>
<feature type="transmembrane region" description="Helical" evidence="2">
    <location>
        <begin position="156"/>
        <end position="176"/>
    </location>
</feature>
<feature type="non-terminal residue">
    <location>
        <position position="1"/>
    </location>
</feature>
<feature type="non-terminal residue">
    <location>
        <position position="231"/>
    </location>
</feature>
<reference key="1">
    <citation type="journal article" date="1996" name="Copeia">
        <title>Crotaline intergeneric relationships based on mitochondrial DNA sequence data.</title>
        <authorList>
            <person name="Kraus F."/>
            <person name="Mink D.G."/>
            <person name="Brown W.M."/>
        </authorList>
    </citation>
    <scope>NUCLEOTIDE SEQUENCE [GENOMIC DNA]</scope>
</reference>
<geneLocation type="mitochondrion"/>
<evidence type="ECO:0000250" key="1"/>
<evidence type="ECO:0000255" key="2"/>
<evidence type="ECO:0000305" key="3"/>
<dbReference type="EC" id="7.1.1.2"/>
<dbReference type="EMBL" id="U41882">
    <property type="protein sequence ID" value="AAB46640.1"/>
    <property type="molecule type" value="Genomic_DNA"/>
</dbReference>
<dbReference type="SMR" id="O03710"/>
<dbReference type="GO" id="GO:0031966">
    <property type="term" value="C:mitochondrial membrane"/>
    <property type="evidence" value="ECO:0007669"/>
    <property type="project" value="UniProtKB-SubCell"/>
</dbReference>
<dbReference type="GO" id="GO:0008137">
    <property type="term" value="F:NADH dehydrogenase (ubiquinone) activity"/>
    <property type="evidence" value="ECO:0007669"/>
    <property type="project" value="UniProtKB-EC"/>
</dbReference>
<dbReference type="GO" id="GO:0048039">
    <property type="term" value="F:ubiquinone binding"/>
    <property type="evidence" value="ECO:0007669"/>
    <property type="project" value="TreeGrafter"/>
</dbReference>
<dbReference type="GO" id="GO:0042773">
    <property type="term" value="P:ATP synthesis coupled electron transport"/>
    <property type="evidence" value="ECO:0007669"/>
    <property type="project" value="InterPro"/>
</dbReference>
<dbReference type="GO" id="GO:0015990">
    <property type="term" value="P:electron transport coupled proton transport"/>
    <property type="evidence" value="ECO:0007669"/>
    <property type="project" value="TreeGrafter"/>
</dbReference>
<dbReference type="InterPro" id="IPR003918">
    <property type="entry name" value="NADH_UbQ_OxRdtase"/>
</dbReference>
<dbReference type="InterPro" id="IPR001750">
    <property type="entry name" value="ND/Mrp_TM"/>
</dbReference>
<dbReference type="PANTHER" id="PTHR43507">
    <property type="entry name" value="NADH-UBIQUINONE OXIDOREDUCTASE CHAIN 4"/>
    <property type="match status" value="1"/>
</dbReference>
<dbReference type="PANTHER" id="PTHR43507:SF20">
    <property type="entry name" value="NADH-UBIQUINONE OXIDOREDUCTASE CHAIN 4"/>
    <property type="match status" value="1"/>
</dbReference>
<dbReference type="Pfam" id="PF00361">
    <property type="entry name" value="Proton_antipo_M"/>
    <property type="match status" value="1"/>
</dbReference>
<sequence length="231" mass="25442">PIAGSMVLAAILLKLGGYGIIRMMQIFPTTKTDLFLPFIVLALWGAILANLTCLQQTDLKSLIAYSSISHMGLVVAAIIIQTPWGLSGAMALMIAHGFTSSALFCLANTTYERTHTRILILTRGFHNILPMTTTWWLMTNLMNIAIPPSMNFTGELLIMSALFNWCPATIIMLGLSMLITASYSLHMFLSTQMGPTLLNSQTEPMHSREHLLITLHLAPLLMISLKPELVI</sequence>
<organism>
    <name type="scientific">Crotalus concolor</name>
    <name type="common">Midget faded rattlesnake</name>
    <name type="synonym">Crotalus oreganus concolor</name>
    <dbReference type="NCBI Taxonomy" id="8740"/>
    <lineage>
        <taxon>Eukaryota</taxon>
        <taxon>Metazoa</taxon>
        <taxon>Chordata</taxon>
        <taxon>Craniata</taxon>
        <taxon>Vertebrata</taxon>
        <taxon>Euteleostomi</taxon>
        <taxon>Lepidosauria</taxon>
        <taxon>Squamata</taxon>
        <taxon>Bifurcata</taxon>
        <taxon>Unidentata</taxon>
        <taxon>Episquamata</taxon>
        <taxon>Toxicofera</taxon>
        <taxon>Serpentes</taxon>
        <taxon>Colubroidea</taxon>
        <taxon>Viperidae</taxon>
        <taxon>Crotalinae</taxon>
        <taxon>Crotalus</taxon>
    </lineage>
</organism>
<comment type="function">
    <text evidence="1">Core subunit of the mitochondrial membrane respiratory chain NADH dehydrogenase (Complex I) that is believed to belong to the minimal assembly required for catalysis. Complex I functions in the transfer of electrons from NADH to the respiratory chain. The immediate electron acceptor for the enzyme is believed to be ubiquinone (By similarity).</text>
</comment>
<comment type="catalytic activity">
    <reaction>
        <text>a ubiquinone + NADH + 5 H(+)(in) = a ubiquinol + NAD(+) + 4 H(+)(out)</text>
        <dbReference type="Rhea" id="RHEA:29091"/>
        <dbReference type="Rhea" id="RHEA-COMP:9565"/>
        <dbReference type="Rhea" id="RHEA-COMP:9566"/>
        <dbReference type="ChEBI" id="CHEBI:15378"/>
        <dbReference type="ChEBI" id="CHEBI:16389"/>
        <dbReference type="ChEBI" id="CHEBI:17976"/>
        <dbReference type="ChEBI" id="CHEBI:57540"/>
        <dbReference type="ChEBI" id="CHEBI:57945"/>
        <dbReference type="EC" id="7.1.1.2"/>
    </reaction>
</comment>
<comment type="subcellular location">
    <subcellularLocation>
        <location evidence="1">Mitochondrion membrane</location>
        <topology evidence="1">Multi-pass membrane protein</topology>
    </subcellularLocation>
</comment>
<comment type="similarity">
    <text evidence="3">Belongs to the complex I subunit 4 family.</text>
</comment>
<gene>
    <name type="primary">MT-ND4</name>
    <name type="synonym">MTND4</name>
    <name type="synonym">NADH4</name>
    <name type="synonym">ND4</name>
</gene>
<keyword id="KW-0249">Electron transport</keyword>
<keyword id="KW-0472">Membrane</keyword>
<keyword id="KW-0496">Mitochondrion</keyword>
<keyword id="KW-0520">NAD</keyword>
<keyword id="KW-0679">Respiratory chain</keyword>
<keyword id="KW-1278">Translocase</keyword>
<keyword id="KW-0812">Transmembrane</keyword>
<keyword id="KW-1133">Transmembrane helix</keyword>
<keyword id="KW-0813">Transport</keyword>
<keyword id="KW-0830">Ubiquinone</keyword>
<accession>O03710</accession>